<feature type="chain" id="PRO_1000134664" description="Vitamin B12 import ATP-binding protein BtuD">
    <location>
        <begin position="1"/>
        <end position="249"/>
    </location>
</feature>
<feature type="domain" description="ABC transporter" evidence="1">
    <location>
        <begin position="1"/>
        <end position="233"/>
    </location>
</feature>
<feature type="binding site" evidence="1">
    <location>
        <begin position="33"/>
        <end position="40"/>
    </location>
    <ligand>
        <name>ATP</name>
        <dbReference type="ChEBI" id="CHEBI:30616"/>
    </ligand>
</feature>
<name>BTUD_ECOSE</name>
<protein>
    <recommendedName>
        <fullName evidence="1">Vitamin B12 import ATP-binding protein BtuD</fullName>
        <ecNumber evidence="1">7.6.2.8</ecNumber>
    </recommendedName>
    <alternativeName>
        <fullName evidence="1">Vitamin B12-transporting ATPase</fullName>
    </alternativeName>
</protein>
<reference key="1">
    <citation type="journal article" date="2008" name="DNA Res.">
        <title>Complete genome sequence and comparative analysis of the wild-type commensal Escherichia coli strain SE11 isolated from a healthy adult.</title>
        <authorList>
            <person name="Oshima K."/>
            <person name="Toh H."/>
            <person name="Ogura Y."/>
            <person name="Sasamoto H."/>
            <person name="Morita H."/>
            <person name="Park S.-H."/>
            <person name="Ooka T."/>
            <person name="Iyoda S."/>
            <person name="Taylor T.D."/>
            <person name="Hayashi T."/>
            <person name="Itoh K."/>
            <person name="Hattori M."/>
        </authorList>
    </citation>
    <scope>NUCLEOTIDE SEQUENCE [LARGE SCALE GENOMIC DNA]</scope>
    <source>
        <strain>SE11</strain>
    </source>
</reference>
<sequence>MSIVMQLQDVAESTRLGPLSGEVRAGEILHLVGPNGAGKSTLLARMAGMTSGKGSIQFAGQPLEAWSATKLALHRAYLSQQQTPPFAMPVWHYLTLHQHDKTRTELLNDVAGALALDDKLGRSTNQLSGGEWQRVRLAAVVLQITPQANPAGQLLLLDEPMNSLDVAQQSALDKILSALCQQGLAIVMSSHDLNHTLRHAHRAWLLKGGKMLASGRREEVLTPPNLAQAYGMNFRRLDIEGHRMLISTI</sequence>
<gene>
    <name evidence="1" type="primary">btuD</name>
    <name type="ordered locus">ECSE_1834</name>
</gene>
<keyword id="KW-0067">ATP-binding</keyword>
<keyword id="KW-0997">Cell inner membrane</keyword>
<keyword id="KW-1003">Cell membrane</keyword>
<keyword id="KW-0472">Membrane</keyword>
<keyword id="KW-0547">Nucleotide-binding</keyword>
<keyword id="KW-1278">Translocase</keyword>
<keyword id="KW-0813">Transport</keyword>
<evidence type="ECO:0000255" key="1">
    <source>
        <dbReference type="HAMAP-Rule" id="MF_01005"/>
    </source>
</evidence>
<comment type="function">
    <text evidence="1">Part of the ABC transporter complex BtuCDF involved in vitamin B12 import. Responsible for energy coupling to the transport system.</text>
</comment>
<comment type="catalytic activity">
    <reaction evidence="1">
        <text>an R-cob(III)alamin(out) + ATP + H2O = an R-cob(III)alamin(in) + ADP + phosphate + H(+)</text>
        <dbReference type="Rhea" id="RHEA:17873"/>
        <dbReference type="ChEBI" id="CHEBI:15377"/>
        <dbReference type="ChEBI" id="CHEBI:15378"/>
        <dbReference type="ChEBI" id="CHEBI:30616"/>
        <dbReference type="ChEBI" id="CHEBI:43474"/>
        <dbReference type="ChEBI" id="CHEBI:140785"/>
        <dbReference type="ChEBI" id="CHEBI:456216"/>
        <dbReference type="EC" id="7.6.2.8"/>
    </reaction>
</comment>
<comment type="subunit">
    <text evidence="1">The complex is composed of two ATP-binding proteins (BtuD), two transmembrane proteins (BtuC) and a solute-binding protein (BtuF).</text>
</comment>
<comment type="subcellular location">
    <subcellularLocation>
        <location evidence="1">Cell inner membrane</location>
        <topology evidence="1">Peripheral membrane protein</topology>
    </subcellularLocation>
</comment>
<comment type="similarity">
    <text evidence="1">Belongs to the ABC transporter superfamily. Vitamin B12 importer (TC 3.A.1.13.1) family.</text>
</comment>
<proteinExistence type="inferred from homology"/>
<accession>B6I8R4</accession>
<organism>
    <name type="scientific">Escherichia coli (strain SE11)</name>
    <dbReference type="NCBI Taxonomy" id="409438"/>
    <lineage>
        <taxon>Bacteria</taxon>
        <taxon>Pseudomonadati</taxon>
        <taxon>Pseudomonadota</taxon>
        <taxon>Gammaproteobacteria</taxon>
        <taxon>Enterobacterales</taxon>
        <taxon>Enterobacteriaceae</taxon>
        <taxon>Escherichia</taxon>
    </lineage>
</organism>
<dbReference type="EC" id="7.6.2.8" evidence="1"/>
<dbReference type="EMBL" id="AP009240">
    <property type="protein sequence ID" value="BAG77358.1"/>
    <property type="molecule type" value="Genomic_DNA"/>
</dbReference>
<dbReference type="RefSeq" id="WP_000029466.1">
    <property type="nucleotide sequence ID" value="NC_011415.1"/>
</dbReference>
<dbReference type="SMR" id="B6I8R4"/>
<dbReference type="GeneID" id="93775873"/>
<dbReference type="KEGG" id="ecy:ECSE_1834"/>
<dbReference type="HOGENOM" id="CLU_000604_1_11_6"/>
<dbReference type="Proteomes" id="UP000008199">
    <property type="component" value="Chromosome"/>
</dbReference>
<dbReference type="GO" id="GO:0005886">
    <property type="term" value="C:plasma membrane"/>
    <property type="evidence" value="ECO:0007669"/>
    <property type="project" value="UniProtKB-SubCell"/>
</dbReference>
<dbReference type="GO" id="GO:0015420">
    <property type="term" value="F:ABC-type vitamin B12 transporter activity"/>
    <property type="evidence" value="ECO:0007669"/>
    <property type="project" value="UniProtKB-UniRule"/>
</dbReference>
<dbReference type="GO" id="GO:0005524">
    <property type="term" value="F:ATP binding"/>
    <property type="evidence" value="ECO:0007669"/>
    <property type="project" value="UniProtKB-KW"/>
</dbReference>
<dbReference type="GO" id="GO:0016887">
    <property type="term" value="F:ATP hydrolysis activity"/>
    <property type="evidence" value="ECO:0007669"/>
    <property type="project" value="InterPro"/>
</dbReference>
<dbReference type="CDD" id="cd03214">
    <property type="entry name" value="ABC_Iron-Siderophores_B12_Hemin"/>
    <property type="match status" value="1"/>
</dbReference>
<dbReference type="FunFam" id="3.40.50.300:FF:000462">
    <property type="entry name" value="Vitamin B12 import ATP-binding protein BtuD"/>
    <property type="match status" value="1"/>
</dbReference>
<dbReference type="Gene3D" id="3.40.50.300">
    <property type="entry name" value="P-loop containing nucleotide triphosphate hydrolases"/>
    <property type="match status" value="1"/>
</dbReference>
<dbReference type="HAMAP" id="MF_01005">
    <property type="entry name" value="BtuD"/>
    <property type="match status" value="1"/>
</dbReference>
<dbReference type="InterPro" id="IPR003593">
    <property type="entry name" value="AAA+_ATPase"/>
</dbReference>
<dbReference type="InterPro" id="IPR003439">
    <property type="entry name" value="ABC_transporter-like_ATP-bd"/>
</dbReference>
<dbReference type="InterPro" id="IPR017871">
    <property type="entry name" value="ABC_transporter-like_CS"/>
</dbReference>
<dbReference type="InterPro" id="IPR023693">
    <property type="entry name" value="ABC_transptr_BtuD"/>
</dbReference>
<dbReference type="InterPro" id="IPR050153">
    <property type="entry name" value="Metal_Ion_Import_ABC"/>
</dbReference>
<dbReference type="InterPro" id="IPR027417">
    <property type="entry name" value="P-loop_NTPase"/>
</dbReference>
<dbReference type="NCBIfam" id="NF002981">
    <property type="entry name" value="PRK03695.1"/>
    <property type="match status" value="1"/>
</dbReference>
<dbReference type="PANTHER" id="PTHR42734">
    <property type="entry name" value="METAL TRANSPORT SYSTEM ATP-BINDING PROTEIN TM_0124-RELATED"/>
    <property type="match status" value="1"/>
</dbReference>
<dbReference type="PANTHER" id="PTHR42734:SF18">
    <property type="entry name" value="VITAMIN B12 IMPORT ATP-BINDING PROTEIN BTUD"/>
    <property type="match status" value="1"/>
</dbReference>
<dbReference type="Pfam" id="PF00005">
    <property type="entry name" value="ABC_tran"/>
    <property type="match status" value="1"/>
</dbReference>
<dbReference type="SMART" id="SM00382">
    <property type="entry name" value="AAA"/>
    <property type="match status" value="1"/>
</dbReference>
<dbReference type="SUPFAM" id="SSF52540">
    <property type="entry name" value="P-loop containing nucleoside triphosphate hydrolases"/>
    <property type="match status" value="1"/>
</dbReference>
<dbReference type="PROSITE" id="PS00211">
    <property type="entry name" value="ABC_TRANSPORTER_1"/>
    <property type="match status" value="1"/>
</dbReference>
<dbReference type="PROSITE" id="PS50893">
    <property type="entry name" value="ABC_TRANSPORTER_2"/>
    <property type="match status" value="1"/>
</dbReference>